<name>RL34_SYNP6</name>
<organism>
    <name type="scientific">Synechococcus sp. (strain ATCC 27144 / PCC 6301 / SAUG 1402/1)</name>
    <name type="common">Anacystis nidulans</name>
    <dbReference type="NCBI Taxonomy" id="269084"/>
    <lineage>
        <taxon>Bacteria</taxon>
        <taxon>Bacillati</taxon>
        <taxon>Cyanobacteriota</taxon>
        <taxon>Cyanophyceae</taxon>
        <taxon>Synechococcales</taxon>
        <taxon>Synechococcaceae</taxon>
        <taxon>Synechococcus</taxon>
    </lineage>
</organism>
<gene>
    <name evidence="1" type="primary">rpmH</name>
    <name evidence="1" type="synonym">rpl34</name>
    <name type="ordered locus">syc0071_d</name>
</gene>
<reference key="1">
    <citation type="journal article" date="2007" name="Photosyn. Res.">
        <title>Complete nucleotide sequence of the freshwater unicellular cyanobacterium Synechococcus elongatus PCC 6301 chromosome: gene content and organization.</title>
        <authorList>
            <person name="Sugita C."/>
            <person name="Ogata K."/>
            <person name="Shikata M."/>
            <person name="Jikuya H."/>
            <person name="Takano J."/>
            <person name="Furumichi M."/>
            <person name="Kanehisa M."/>
            <person name="Omata T."/>
            <person name="Sugiura M."/>
            <person name="Sugita M."/>
        </authorList>
    </citation>
    <scope>NUCLEOTIDE SEQUENCE [LARGE SCALE GENOMIC DNA]</scope>
    <source>
        <strain>ATCC 27144 / PCC 6301 / SAUG 1402/1</strain>
    </source>
</reference>
<accession>Q5N606</accession>
<protein>
    <recommendedName>
        <fullName evidence="1">Large ribosomal subunit protein bL34</fullName>
    </recommendedName>
    <alternativeName>
        <fullName evidence="3">50S ribosomal protein L34</fullName>
    </alternativeName>
</protein>
<dbReference type="EMBL" id="AP008231">
    <property type="protein sequence ID" value="BAD78261.1"/>
    <property type="molecule type" value="Genomic_DNA"/>
</dbReference>
<dbReference type="RefSeq" id="WP_011242384.1">
    <property type="nucleotide sequence ID" value="NZ_CP085785.1"/>
</dbReference>
<dbReference type="SMR" id="Q5N606"/>
<dbReference type="GeneID" id="72430347"/>
<dbReference type="KEGG" id="syc:syc0071_d"/>
<dbReference type="eggNOG" id="COG0230">
    <property type="taxonomic scope" value="Bacteria"/>
</dbReference>
<dbReference type="Proteomes" id="UP000001175">
    <property type="component" value="Chromosome"/>
</dbReference>
<dbReference type="GO" id="GO:1990904">
    <property type="term" value="C:ribonucleoprotein complex"/>
    <property type="evidence" value="ECO:0007669"/>
    <property type="project" value="UniProtKB-KW"/>
</dbReference>
<dbReference type="GO" id="GO:0005840">
    <property type="term" value="C:ribosome"/>
    <property type="evidence" value="ECO:0007669"/>
    <property type="project" value="UniProtKB-KW"/>
</dbReference>
<dbReference type="GO" id="GO:0003735">
    <property type="term" value="F:structural constituent of ribosome"/>
    <property type="evidence" value="ECO:0007669"/>
    <property type="project" value="InterPro"/>
</dbReference>
<dbReference type="GO" id="GO:0006412">
    <property type="term" value="P:translation"/>
    <property type="evidence" value="ECO:0007669"/>
    <property type="project" value="UniProtKB-UniRule"/>
</dbReference>
<dbReference type="Gene3D" id="1.10.287.3980">
    <property type="match status" value="1"/>
</dbReference>
<dbReference type="HAMAP" id="MF_00391">
    <property type="entry name" value="Ribosomal_bL34"/>
    <property type="match status" value="1"/>
</dbReference>
<dbReference type="InterPro" id="IPR000271">
    <property type="entry name" value="Ribosomal_bL34"/>
</dbReference>
<dbReference type="InterPro" id="IPR020939">
    <property type="entry name" value="Ribosomal_bL34_CS"/>
</dbReference>
<dbReference type="NCBIfam" id="TIGR01030">
    <property type="entry name" value="rpmH_bact"/>
    <property type="match status" value="1"/>
</dbReference>
<dbReference type="Pfam" id="PF00468">
    <property type="entry name" value="Ribosomal_L34"/>
    <property type="match status" value="1"/>
</dbReference>
<dbReference type="PROSITE" id="PS00784">
    <property type="entry name" value="RIBOSOMAL_L34"/>
    <property type="match status" value="1"/>
</dbReference>
<proteinExistence type="inferred from homology"/>
<comment type="similarity">
    <text evidence="1">Belongs to the bacterial ribosomal protein bL34 family.</text>
</comment>
<feature type="chain" id="PRO_0000187484" description="Large ribosomal subunit protein bL34">
    <location>
        <begin position="1"/>
        <end position="45"/>
    </location>
</feature>
<feature type="region of interest" description="Disordered" evidence="2">
    <location>
        <begin position="1"/>
        <end position="27"/>
    </location>
</feature>
<feature type="compositionally biased region" description="Basic and acidic residues" evidence="2">
    <location>
        <begin position="1"/>
        <end position="10"/>
    </location>
</feature>
<feature type="compositionally biased region" description="Basic residues" evidence="2">
    <location>
        <begin position="11"/>
        <end position="23"/>
    </location>
</feature>
<evidence type="ECO:0000255" key="1">
    <source>
        <dbReference type="HAMAP-Rule" id="MF_00391"/>
    </source>
</evidence>
<evidence type="ECO:0000256" key="2">
    <source>
        <dbReference type="SAM" id="MobiDB-lite"/>
    </source>
</evidence>
<evidence type="ECO:0000305" key="3"/>
<keyword id="KW-0687">Ribonucleoprotein</keyword>
<keyword id="KW-0689">Ribosomal protein</keyword>
<sequence>MTKRTLEGTNRKRKRTSGFRARMRSATGRRVIKARRSKGRARLAV</sequence>